<keyword id="KW-1185">Reference proteome</keyword>
<evidence type="ECO:0000256" key="1">
    <source>
        <dbReference type="SAM" id="MobiDB-lite"/>
    </source>
</evidence>
<name>Y500B_MYCTO</name>
<accession>P9WKT4</accession>
<accession>L0T6V8</accession>
<accession>P0A5C9</accession>
<accession>Q9CB56</accession>
<dbReference type="EMBL" id="AE000516">
    <property type="status" value="NOT_ANNOTATED_CDS"/>
    <property type="molecule type" value="Genomic_DNA"/>
</dbReference>
<dbReference type="RefSeq" id="WP_003402602.1">
    <property type="nucleotide sequence ID" value="NZ_KK341227.1"/>
</dbReference>
<dbReference type="SMR" id="P9WKT4"/>
<dbReference type="PATRIC" id="fig|83331.31.peg.552"/>
<dbReference type="Proteomes" id="UP000001020">
    <property type="component" value="Chromosome"/>
</dbReference>
<dbReference type="InterPro" id="IPR013177">
    <property type="entry name" value="Ribosomal_mS38_C"/>
</dbReference>
<dbReference type="NCBIfam" id="NF047430">
    <property type="entry name" value="ribo_bS22"/>
    <property type="match status" value="1"/>
</dbReference>
<dbReference type="Pfam" id="PF08213">
    <property type="entry name" value="COX24_C"/>
    <property type="match status" value="1"/>
</dbReference>
<dbReference type="SMART" id="SM01155">
    <property type="entry name" value="DUF1713"/>
    <property type="match status" value="1"/>
</dbReference>
<gene>
    <name type="ordered locus">MT0521.1</name>
</gene>
<reference key="1">
    <citation type="journal article" date="2002" name="J. Bacteriol.">
        <title>Whole-genome comparison of Mycobacterium tuberculosis clinical and laboratory strains.</title>
        <authorList>
            <person name="Fleischmann R.D."/>
            <person name="Alland D."/>
            <person name="Eisen J.A."/>
            <person name="Carpenter L."/>
            <person name="White O."/>
            <person name="Peterson J.D."/>
            <person name="DeBoy R.T."/>
            <person name="Dodson R.J."/>
            <person name="Gwinn M.L."/>
            <person name="Haft D.H."/>
            <person name="Hickey E.K."/>
            <person name="Kolonay J.F."/>
            <person name="Nelson W.C."/>
            <person name="Umayam L.A."/>
            <person name="Ermolaeva M.D."/>
            <person name="Salzberg S.L."/>
            <person name="Delcher A."/>
            <person name="Utterback T.R."/>
            <person name="Weidman J.F."/>
            <person name="Khouri H.M."/>
            <person name="Gill J."/>
            <person name="Mikula A."/>
            <person name="Bishai W."/>
            <person name="Jacobs W.R. Jr."/>
            <person name="Venter J.C."/>
            <person name="Fraser C.M."/>
        </authorList>
    </citation>
    <scope>NUCLEOTIDE SEQUENCE [LARGE SCALE GENOMIC DNA]</scope>
    <source>
        <strain>CDC 1551 / Oshkosh</strain>
    </source>
</reference>
<feature type="chain" id="PRO_0000427598" description="Uncharacterized protein MT0521.1">
    <location>
        <begin position="1"/>
        <end position="33"/>
    </location>
</feature>
<feature type="region of interest" description="Disordered" evidence="1">
    <location>
        <begin position="1"/>
        <end position="33"/>
    </location>
</feature>
<organism>
    <name type="scientific">Mycobacterium tuberculosis (strain CDC 1551 / Oshkosh)</name>
    <dbReference type="NCBI Taxonomy" id="83331"/>
    <lineage>
        <taxon>Bacteria</taxon>
        <taxon>Bacillati</taxon>
        <taxon>Actinomycetota</taxon>
        <taxon>Actinomycetes</taxon>
        <taxon>Mycobacteriales</taxon>
        <taxon>Mycobacteriaceae</taxon>
        <taxon>Mycobacterium</taxon>
        <taxon>Mycobacterium tuberculosis complex</taxon>
    </lineage>
</organism>
<sequence>MGSVIKKRRKRMSKKKHRKLLRRTRVQRRKLGK</sequence>
<proteinExistence type="predicted"/>
<protein>
    <recommendedName>
        <fullName>Uncharacterized protein MT0521.1</fullName>
    </recommendedName>
</protein>